<feature type="chain" id="PRO_1000072682" description="UDP-N-acetylmuramoylalanine--D-glutamate ligase">
    <location>
        <begin position="1"/>
        <end position="420"/>
    </location>
</feature>
<feature type="binding site" evidence="1">
    <location>
        <begin position="109"/>
        <end position="115"/>
    </location>
    <ligand>
        <name>ATP</name>
        <dbReference type="ChEBI" id="CHEBI:30616"/>
    </ligand>
</feature>
<gene>
    <name evidence="1" type="primary">murD</name>
    <name type="ordered locus">Fnod_1728</name>
</gene>
<reference key="1">
    <citation type="submission" date="2007-07" db="EMBL/GenBank/DDBJ databases">
        <title>Complete sequence of Fervidobacterium nodosum Rt17-B1.</title>
        <authorList>
            <consortium name="US DOE Joint Genome Institute"/>
            <person name="Copeland A."/>
            <person name="Lucas S."/>
            <person name="Lapidus A."/>
            <person name="Barry K."/>
            <person name="Glavina del Rio T."/>
            <person name="Dalin E."/>
            <person name="Tice H."/>
            <person name="Pitluck S."/>
            <person name="Saunders E."/>
            <person name="Brettin T."/>
            <person name="Bruce D."/>
            <person name="Detter J.C."/>
            <person name="Han C."/>
            <person name="Schmutz J."/>
            <person name="Larimer F."/>
            <person name="Land M."/>
            <person name="Hauser L."/>
            <person name="Kyrpides N."/>
            <person name="Mikhailova N."/>
            <person name="Nelson K."/>
            <person name="Gogarten J.P."/>
            <person name="Noll K."/>
            <person name="Richardson P."/>
        </authorList>
    </citation>
    <scope>NUCLEOTIDE SEQUENCE [LARGE SCALE GENOMIC DNA]</scope>
    <source>
        <strain>ATCC 35602 / DSM 5306 / Rt17-B1</strain>
    </source>
</reference>
<keyword id="KW-0067">ATP-binding</keyword>
<keyword id="KW-0131">Cell cycle</keyword>
<keyword id="KW-0132">Cell division</keyword>
<keyword id="KW-0133">Cell shape</keyword>
<keyword id="KW-0961">Cell wall biogenesis/degradation</keyword>
<keyword id="KW-0963">Cytoplasm</keyword>
<keyword id="KW-0436">Ligase</keyword>
<keyword id="KW-0547">Nucleotide-binding</keyword>
<keyword id="KW-0573">Peptidoglycan synthesis</keyword>
<keyword id="KW-1185">Reference proteome</keyword>
<sequence length="420" mass="47567">MQYALLGLGLSNKYAAKFLLKLGEKIFVSESGKLSSEDKAFLEENNIPYEEGVNSEKILEADVILTSPSVPHNHPILLKAQQMGKYVDTEITYFMKFLDWKPKIIAVTGSVGKSTTVAMINHLISKSASSQISGNFGIPIAQVLLEGKKPEYIVVEISSFQLYWTPFFKPNVAVITNIYPNHLDWHPSMEHYVDSKFKITKFQDNEDHFVYNPKDMETFKRLALVQAKRVPFTVDFKFEEIPFHIRTKQNMENIAAAKTVLKVLGLPFSMSMLEDFTPLPHRMEYCGTINGAHYYNDSKATNAAAVVKALENFDNNLYLIIAGKGKNEDYSKLANEISKKCKFVAIVGPISDAVEPYLKERNVNYKRFSNIEEAVFEISKMAKEGDYVLLGPAGASYDAYKNFEERGNHFKEIVKKLMQG</sequence>
<evidence type="ECO:0000255" key="1">
    <source>
        <dbReference type="HAMAP-Rule" id="MF_00639"/>
    </source>
</evidence>
<proteinExistence type="inferred from homology"/>
<protein>
    <recommendedName>
        <fullName evidence="1">UDP-N-acetylmuramoylalanine--D-glutamate ligase</fullName>
        <ecNumber evidence="1">6.3.2.9</ecNumber>
    </recommendedName>
    <alternativeName>
        <fullName evidence="1">D-glutamic acid-adding enzyme</fullName>
    </alternativeName>
    <alternativeName>
        <fullName evidence="1">UDP-N-acetylmuramoyl-L-alanyl-D-glutamate synthetase</fullName>
    </alternativeName>
</protein>
<name>MURD_FERNB</name>
<accession>A7HNT0</accession>
<comment type="function">
    <text evidence="1">Cell wall formation. Catalyzes the addition of glutamate to the nucleotide precursor UDP-N-acetylmuramoyl-L-alanine (UMA).</text>
</comment>
<comment type="catalytic activity">
    <reaction evidence="1">
        <text>UDP-N-acetyl-alpha-D-muramoyl-L-alanine + D-glutamate + ATP = UDP-N-acetyl-alpha-D-muramoyl-L-alanyl-D-glutamate + ADP + phosphate + H(+)</text>
        <dbReference type="Rhea" id="RHEA:16429"/>
        <dbReference type="ChEBI" id="CHEBI:15378"/>
        <dbReference type="ChEBI" id="CHEBI:29986"/>
        <dbReference type="ChEBI" id="CHEBI:30616"/>
        <dbReference type="ChEBI" id="CHEBI:43474"/>
        <dbReference type="ChEBI" id="CHEBI:83898"/>
        <dbReference type="ChEBI" id="CHEBI:83900"/>
        <dbReference type="ChEBI" id="CHEBI:456216"/>
        <dbReference type="EC" id="6.3.2.9"/>
    </reaction>
</comment>
<comment type="pathway">
    <text evidence="1">Cell wall biogenesis; peptidoglycan biosynthesis.</text>
</comment>
<comment type="subcellular location">
    <subcellularLocation>
        <location evidence="1">Cytoplasm</location>
    </subcellularLocation>
</comment>
<comment type="similarity">
    <text evidence="1">Belongs to the MurCDEF family.</text>
</comment>
<organism>
    <name type="scientific">Fervidobacterium nodosum (strain ATCC 35602 / DSM 5306 / Rt17-B1)</name>
    <dbReference type="NCBI Taxonomy" id="381764"/>
    <lineage>
        <taxon>Bacteria</taxon>
        <taxon>Thermotogati</taxon>
        <taxon>Thermotogota</taxon>
        <taxon>Thermotogae</taxon>
        <taxon>Thermotogales</taxon>
        <taxon>Fervidobacteriaceae</taxon>
        <taxon>Fervidobacterium</taxon>
    </lineage>
</organism>
<dbReference type="EC" id="6.3.2.9" evidence="1"/>
<dbReference type="EMBL" id="CP000771">
    <property type="protein sequence ID" value="ABS61563.1"/>
    <property type="molecule type" value="Genomic_DNA"/>
</dbReference>
<dbReference type="RefSeq" id="WP_011994854.1">
    <property type="nucleotide sequence ID" value="NC_009718.1"/>
</dbReference>
<dbReference type="SMR" id="A7HNT0"/>
<dbReference type="STRING" id="381764.Fnod_1728"/>
<dbReference type="KEGG" id="fno:Fnod_1728"/>
<dbReference type="eggNOG" id="COG0771">
    <property type="taxonomic scope" value="Bacteria"/>
</dbReference>
<dbReference type="HOGENOM" id="CLU_032540_0_0_0"/>
<dbReference type="OrthoDB" id="9809796at2"/>
<dbReference type="UniPathway" id="UPA00219"/>
<dbReference type="Proteomes" id="UP000002415">
    <property type="component" value="Chromosome"/>
</dbReference>
<dbReference type="GO" id="GO:0005737">
    <property type="term" value="C:cytoplasm"/>
    <property type="evidence" value="ECO:0007669"/>
    <property type="project" value="UniProtKB-SubCell"/>
</dbReference>
<dbReference type="GO" id="GO:0005524">
    <property type="term" value="F:ATP binding"/>
    <property type="evidence" value="ECO:0007669"/>
    <property type="project" value="UniProtKB-UniRule"/>
</dbReference>
<dbReference type="GO" id="GO:0008764">
    <property type="term" value="F:UDP-N-acetylmuramoylalanine-D-glutamate ligase activity"/>
    <property type="evidence" value="ECO:0007669"/>
    <property type="project" value="UniProtKB-UniRule"/>
</dbReference>
<dbReference type="GO" id="GO:0051301">
    <property type="term" value="P:cell division"/>
    <property type="evidence" value="ECO:0007669"/>
    <property type="project" value="UniProtKB-KW"/>
</dbReference>
<dbReference type="GO" id="GO:0071555">
    <property type="term" value="P:cell wall organization"/>
    <property type="evidence" value="ECO:0007669"/>
    <property type="project" value="UniProtKB-KW"/>
</dbReference>
<dbReference type="GO" id="GO:0009252">
    <property type="term" value="P:peptidoglycan biosynthetic process"/>
    <property type="evidence" value="ECO:0007669"/>
    <property type="project" value="UniProtKB-UniRule"/>
</dbReference>
<dbReference type="GO" id="GO:0008360">
    <property type="term" value="P:regulation of cell shape"/>
    <property type="evidence" value="ECO:0007669"/>
    <property type="project" value="UniProtKB-KW"/>
</dbReference>
<dbReference type="Gene3D" id="3.90.190.20">
    <property type="entry name" value="Mur ligase, C-terminal domain"/>
    <property type="match status" value="1"/>
</dbReference>
<dbReference type="Gene3D" id="3.40.1190.10">
    <property type="entry name" value="Mur-like, catalytic domain"/>
    <property type="match status" value="1"/>
</dbReference>
<dbReference type="Gene3D" id="3.40.50.720">
    <property type="entry name" value="NAD(P)-binding Rossmann-like Domain"/>
    <property type="match status" value="1"/>
</dbReference>
<dbReference type="HAMAP" id="MF_00639">
    <property type="entry name" value="MurD"/>
    <property type="match status" value="1"/>
</dbReference>
<dbReference type="InterPro" id="IPR036565">
    <property type="entry name" value="Mur-like_cat_sf"/>
</dbReference>
<dbReference type="InterPro" id="IPR004101">
    <property type="entry name" value="Mur_ligase_C"/>
</dbReference>
<dbReference type="InterPro" id="IPR036615">
    <property type="entry name" value="Mur_ligase_C_dom_sf"/>
</dbReference>
<dbReference type="InterPro" id="IPR013221">
    <property type="entry name" value="Mur_ligase_cen"/>
</dbReference>
<dbReference type="InterPro" id="IPR005762">
    <property type="entry name" value="MurD"/>
</dbReference>
<dbReference type="NCBIfam" id="TIGR01087">
    <property type="entry name" value="murD"/>
    <property type="match status" value="1"/>
</dbReference>
<dbReference type="PANTHER" id="PTHR43692">
    <property type="entry name" value="UDP-N-ACETYLMURAMOYLALANINE--D-GLUTAMATE LIGASE"/>
    <property type="match status" value="1"/>
</dbReference>
<dbReference type="PANTHER" id="PTHR43692:SF1">
    <property type="entry name" value="UDP-N-ACETYLMURAMOYLALANINE--D-GLUTAMATE LIGASE"/>
    <property type="match status" value="1"/>
</dbReference>
<dbReference type="Pfam" id="PF02875">
    <property type="entry name" value="Mur_ligase_C"/>
    <property type="match status" value="1"/>
</dbReference>
<dbReference type="Pfam" id="PF08245">
    <property type="entry name" value="Mur_ligase_M"/>
    <property type="match status" value="1"/>
</dbReference>
<dbReference type="Pfam" id="PF21377">
    <property type="entry name" value="MurD_N"/>
    <property type="match status" value="1"/>
</dbReference>
<dbReference type="SUPFAM" id="SSF51984">
    <property type="entry name" value="MurCD N-terminal domain"/>
    <property type="match status" value="1"/>
</dbReference>
<dbReference type="SUPFAM" id="SSF53623">
    <property type="entry name" value="MurD-like peptide ligases, catalytic domain"/>
    <property type="match status" value="1"/>
</dbReference>
<dbReference type="SUPFAM" id="SSF53244">
    <property type="entry name" value="MurD-like peptide ligases, peptide-binding domain"/>
    <property type="match status" value="1"/>
</dbReference>